<reference key="1">
    <citation type="journal article" date="2002" name="DNA Res.">
        <title>Complete genomic sequence of nitrogen-fixing symbiotic bacterium Bradyrhizobium japonicum USDA110.</title>
        <authorList>
            <person name="Kaneko T."/>
            <person name="Nakamura Y."/>
            <person name="Sato S."/>
            <person name="Minamisawa K."/>
            <person name="Uchiumi T."/>
            <person name="Sasamoto S."/>
            <person name="Watanabe A."/>
            <person name="Idesawa K."/>
            <person name="Iriguchi M."/>
            <person name="Kawashima K."/>
            <person name="Kohara M."/>
            <person name="Matsumoto M."/>
            <person name="Shimpo S."/>
            <person name="Tsuruoka H."/>
            <person name="Wada T."/>
            <person name="Yamada M."/>
            <person name="Tabata S."/>
        </authorList>
    </citation>
    <scope>NUCLEOTIDE SEQUENCE [LARGE SCALE GENOMIC DNA]</scope>
    <source>
        <strain>JCM 10833 / BCRC 13528 / IAM 13628 / NBRC 14792 / USDA 110</strain>
    </source>
</reference>
<proteinExistence type="inferred from homology"/>
<sequence length="326" mass="35372">MSRVSEQPVDRITIPLLQRWKQDGRRLVMTTAYDAVAAPIPDPSIDISLVGDSGGNVCLGFENTPPVSVAMMNHHLEAAVRSKPRALLVADMSFLSFHVSVEETIRNAGGFLQRGAAAARLEGGGKRIEMVRAIVDCEIPVMGHLGLVPQSVNVMGGFKVQGRKVDEALRLLDDAHRLQEASCFALVLEGTPAELTARVSDSLTIPTIGIGSGPDCSEQVLCFMTCWAKPKVIAPNSFPPIRKAFSSSMMRFRAGQRMSAVARSPARKSPIGFPKALGRQLPTGRHPPQIITSVAELRRTLAKSRSANQRAGLCRRWAISTMATWR</sequence>
<protein>
    <recommendedName>
        <fullName evidence="1">3-methyl-2-oxobutanoate hydroxymethyltransferase 1</fullName>
        <ecNumber evidence="1">2.1.2.11</ecNumber>
    </recommendedName>
    <alternativeName>
        <fullName evidence="1">Ketopantoate hydroxymethyltransferase 1</fullName>
        <shortName evidence="1">KPHMT 1</shortName>
    </alternativeName>
</protein>
<accession>Q89TZ6</accession>
<comment type="function">
    <text evidence="1">Catalyzes the reversible reaction in which hydroxymethyl group from 5,10-methylenetetrahydrofolate is transferred onto alpha-ketoisovalerate to form ketopantoate.</text>
</comment>
<comment type="catalytic activity">
    <reaction evidence="1">
        <text>3-methyl-2-oxobutanoate + (6R)-5,10-methylene-5,6,7,8-tetrahydrofolate + H2O = 2-dehydropantoate + (6S)-5,6,7,8-tetrahydrofolate</text>
        <dbReference type="Rhea" id="RHEA:11824"/>
        <dbReference type="ChEBI" id="CHEBI:11561"/>
        <dbReference type="ChEBI" id="CHEBI:11851"/>
        <dbReference type="ChEBI" id="CHEBI:15377"/>
        <dbReference type="ChEBI" id="CHEBI:15636"/>
        <dbReference type="ChEBI" id="CHEBI:57453"/>
        <dbReference type="EC" id="2.1.2.11"/>
    </reaction>
</comment>
<comment type="cofactor">
    <cofactor evidence="1">
        <name>Mg(2+)</name>
        <dbReference type="ChEBI" id="CHEBI:18420"/>
    </cofactor>
    <text evidence="1">Binds 1 Mg(2+) ion per subunit.</text>
</comment>
<comment type="pathway">
    <text evidence="1">Cofactor biosynthesis; (R)-pantothenate biosynthesis; (R)-pantoate from 3-methyl-2-oxobutanoate: step 1/2.</text>
</comment>
<comment type="subunit">
    <text evidence="1">Homodecamer; pentamer of dimers.</text>
</comment>
<comment type="subcellular location">
    <subcellularLocation>
        <location evidence="1">Cytoplasm</location>
    </subcellularLocation>
</comment>
<comment type="similarity">
    <text evidence="1">Belongs to the PanB family.</text>
</comment>
<name>PANB1_BRADU</name>
<dbReference type="EC" id="2.1.2.11" evidence="1"/>
<dbReference type="EMBL" id="BA000040">
    <property type="protein sequence ID" value="BAC46891.1"/>
    <property type="molecule type" value="Genomic_DNA"/>
</dbReference>
<dbReference type="RefSeq" id="NP_768266.1">
    <property type="nucleotide sequence ID" value="NC_004463.1"/>
</dbReference>
<dbReference type="SMR" id="Q89TZ6"/>
<dbReference type="FunCoup" id="Q89TZ6">
    <property type="interactions" value="547"/>
</dbReference>
<dbReference type="EnsemblBacteria" id="BAC46891">
    <property type="protein sequence ID" value="BAC46891"/>
    <property type="gene ID" value="BAC46891"/>
</dbReference>
<dbReference type="KEGG" id="bja:blr1626"/>
<dbReference type="eggNOG" id="COG0413">
    <property type="taxonomic scope" value="Bacteria"/>
</dbReference>
<dbReference type="HOGENOM" id="CLU_036645_1_0_5"/>
<dbReference type="InParanoid" id="Q89TZ6"/>
<dbReference type="OrthoDB" id="9781789at2"/>
<dbReference type="PhylomeDB" id="Q89TZ6"/>
<dbReference type="UniPathway" id="UPA00028">
    <property type="reaction ID" value="UER00003"/>
</dbReference>
<dbReference type="Proteomes" id="UP000002526">
    <property type="component" value="Chromosome"/>
</dbReference>
<dbReference type="GO" id="GO:0005737">
    <property type="term" value="C:cytoplasm"/>
    <property type="evidence" value="ECO:0000318"/>
    <property type="project" value="GO_Central"/>
</dbReference>
<dbReference type="GO" id="GO:0003864">
    <property type="term" value="F:3-methyl-2-oxobutanoate hydroxymethyltransferase activity"/>
    <property type="evidence" value="ECO:0000318"/>
    <property type="project" value="GO_Central"/>
</dbReference>
<dbReference type="GO" id="GO:0000287">
    <property type="term" value="F:magnesium ion binding"/>
    <property type="evidence" value="ECO:0000318"/>
    <property type="project" value="GO_Central"/>
</dbReference>
<dbReference type="GO" id="GO:0015940">
    <property type="term" value="P:pantothenate biosynthetic process"/>
    <property type="evidence" value="ECO:0000318"/>
    <property type="project" value="GO_Central"/>
</dbReference>
<dbReference type="CDD" id="cd06557">
    <property type="entry name" value="KPHMT-like"/>
    <property type="match status" value="1"/>
</dbReference>
<dbReference type="FunFam" id="3.20.20.60:FF:000053">
    <property type="entry name" value="3-methyl-2-oxobutanoate hydroxymethyltransferase"/>
    <property type="match status" value="1"/>
</dbReference>
<dbReference type="Gene3D" id="3.20.20.60">
    <property type="entry name" value="Phosphoenolpyruvate-binding domains"/>
    <property type="match status" value="1"/>
</dbReference>
<dbReference type="HAMAP" id="MF_00156">
    <property type="entry name" value="PanB"/>
    <property type="match status" value="1"/>
</dbReference>
<dbReference type="InterPro" id="IPR003700">
    <property type="entry name" value="Pantoate_hydroxy_MeTrfase"/>
</dbReference>
<dbReference type="InterPro" id="IPR015813">
    <property type="entry name" value="Pyrv/PenolPyrv_kinase-like_dom"/>
</dbReference>
<dbReference type="InterPro" id="IPR040442">
    <property type="entry name" value="Pyrv_kinase-like_dom_sf"/>
</dbReference>
<dbReference type="NCBIfam" id="TIGR00222">
    <property type="entry name" value="panB"/>
    <property type="match status" value="1"/>
</dbReference>
<dbReference type="PANTHER" id="PTHR20881">
    <property type="entry name" value="3-METHYL-2-OXOBUTANOATE HYDROXYMETHYLTRANSFERASE"/>
    <property type="match status" value="1"/>
</dbReference>
<dbReference type="PANTHER" id="PTHR20881:SF0">
    <property type="entry name" value="3-METHYL-2-OXOBUTANOATE HYDROXYMETHYLTRANSFERASE"/>
    <property type="match status" value="1"/>
</dbReference>
<dbReference type="Pfam" id="PF02548">
    <property type="entry name" value="Pantoate_transf"/>
    <property type="match status" value="1"/>
</dbReference>
<dbReference type="SUPFAM" id="SSF51621">
    <property type="entry name" value="Phosphoenolpyruvate/pyruvate domain"/>
    <property type="match status" value="1"/>
</dbReference>
<gene>
    <name evidence="1" type="primary">panB1</name>
    <name type="ordered locus">blr1626</name>
</gene>
<feature type="chain" id="PRO_0000297225" description="3-methyl-2-oxobutanoate hydroxymethyltransferase 1">
    <location>
        <begin position="1"/>
        <end position="326"/>
    </location>
</feature>
<feature type="active site" description="Proton acceptor" evidence="1">
    <location>
        <position position="189"/>
    </location>
</feature>
<feature type="binding site" evidence="1">
    <location>
        <begin position="52"/>
        <end position="53"/>
    </location>
    <ligand>
        <name>3-methyl-2-oxobutanoate</name>
        <dbReference type="ChEBI" id="CHEBI:11851"/>
    </ligand>
</feature>
<feature type="binding site" evidence="1">
    <location>
        <position position="52"/>
    </location>
    <ligand>
        <name>Mg(2+)</name>
        <dbReference type="ChEBI" id="CHEBI:18420"/>
    </ligand>
</feature>
<feature type="binding site" evidence="1">
    <location>
        <position position="91"/>
    </location>
    <ligand>
        <name>3-methyl-2-oxobutanoate</name>
        <dbReference type="ChEBI" id="CHEBI:11851"/>
    </ligand>
</feature>
<feature type="binding site" evidence="1">
    <location>
        <position position="91"/>
    </location>
    <ligand>
        <name>Mg(2+)</name>
        <dbReference type="ChEBI" id="CHEBI:18420"/>
    </ligand>
</feature>
<feature type="binding site" evidence="1">
    <location>
        <position position="122"/>
    </location>
    <ligand>
        <name>Mg(2+)</name>
        <dbReference type="ChEBI" id="CHEBI:18420"/>
    </ligand>
</feature>
<evidence type="ECO:0000255" key="1">
    <source>
        <dbReference type="HAMAP-Rule" id="MF_00156"/>
    </source>
</evidence>
<organism>
    <name type="scientific">Bradyrhizobium diazoefficiens (strain JCM 10833 / BCRC 13528 / IAM 13628 / NBRC 14792 / USDA 110)</name>
    <dbReference type="NCBI Taxonomy" id="224911"/>
    <lineage>
        <taxon>Bacteria</taxon>
        <taxon>Pseudomonadati</taxon>
        <taxon>Pseudomonadota</taxon>
        <taxon>Alphaproteobacteria</taxon>
        <taxon>Hyphomicrobiales</taxon>
        <taxon>Nitrobacteraceae</taxon>
        <taxon>Bradyrhizobium</taxon>
    </lineage>
</organism>
<keyword id="KW-0963">Cytoplasm</keyword>
<keyword id="KW-0460">Magnesium</keyword>
<keyword id="KW-0479">Metal-binding</keyword>
<keyword id="KW-0566">Pantothenate biosynthesis</keyword>
<keyword id="KW-1185">Reference proteome</keyword>
<keyword id="KW-0808">Transferase</keyword>